<protein>
    <recommendedName>
        <fullName>Protein Jade-3</fullName>
    </recommendedName>
    <alternativeName>
        <fullName>Jade family PHD finger protein 3</fullName>
    </alternativeName>
    <alternativeName>
        <fullName>PHD finger protein 16</fullName>
    </alternativeName>
</protein>
<proteinExistence type="evidence at protein level"/>
<comment type="function">
    <text evidence="1">Scaffold subunit of some HBO1 complexes, which have a histone H4 acetyltransferase activity.</text>
</comment>
<comment type="subunit">
    <text evidence="1">Component of the HBO1 complex composed at least of ING4 or ING5, MYST2/HBO1, MEAF6, and one of JADE1, JADE2 and JADE3.</text>
</comment>
<comment type="similarity">
    <text evidence="5">Belongs to the JADE family.</text>
</comment>
<comment type="sequence caution" evidence="5">
    <conflict type="frameshift">
        <sequence resource="EMBL-CDS" id="BAC97901"/>
    </conflict>
</comment>
<name>JADE3_MOUSE</name>
<feature type="chain" id="PRO_0000253534" description="Protein Jade-3">
    <location>
        <begin position="1"/>
        <end position="823"/>
    </location>
</feature>
<feature type="zinc finger region" description="PHD-type 1" evidence="2">
    <location>
        <begin position="200"/>
        <end position="250"/>
    </location>
</feature>
<feature type="zinc finger region" description="C2HC pre-PHD-type" evidence="3">
    <location>
        <begin position="252"/>
        <end position="286"/>
    </location>
</feature>
<feature type="zinc finger region" description="PHD-type 2" evidence="3">
    <location>
        <begin position="310"/>
        <end position="366"/>
    </location>
</feature>
<feature type="region of interest" description="Disordered" evidence="4">
    <location>
        <begin position="1"/>
        <end position="40"/>
    </location>
</feature>
<feature type="region of interest" description="Disordered" evidence="4">
    <location>
        <begin position="543"/>
        <end position="585"/>
    </location>
</feature>
<feature type="region of interest" description="Disordered" evidence="4">
    <location>
        <begin position="601"/>
        <end position="631"/>
    </location>
</feature>
<feature type="region of interest" description="Disordered" evidence="4">
    <location>
        <begin position="651"/>
        <end position="676"/>
    </location>
</feature>
<feature type="region of interest" description="Disordered" evidence="4">
    <location>
        <begin position="756"/>
        <end position="823"/>
    </location>
</feature>
<feature type="compositionally biased region" description="Low complexity" evidence="4">
    <location>
        <begin position="8"/>
        <end position="20"/>
    </location>
</feature>
<feature type="compositionally biased region" description="Basic and acidic residues" evidence="4">
    <location>
        <begin position="549"/>
        <end position="562"/>
    </location>
</feature>
<feature type="compositionally biased region" description="Basic and acidic residues" evidence="4">
    <location>
        <begin position="781"/>
        <end position="809"/>
    </location>
</feature>
<feature type="modified residue" description="N6-acetyllysine" evidence="1">
    <location>
        <position position="30"/>
    </location>
</feature>
<feature type="modified residue" description="N6-acetyllysine" evidence="7">
    <location>
        <position position="32"/>
    </location>
</feature>
<feature type="modified residue" description="N6-acetyllysine" evidence="7">
    <location>
        <position position="35"/>
    </location>
</feature>
<feature type="modified residue" description="Phosphoserine" evidence="1">
    <location>
        <position position="566"/>
    </location>
</feature>
<feature type="modified residue" description="Phosphoserine" evidence="6">
    <location>
        <position position="578"/>
    </location>
</feature>
<feature type="modified residue" description="N6-acetyllysine" evidence="7">
    <location>
        <position position="601"/>
    </location>
</feature>
<feature type="modified residue" description="Phosphoserine" evidence="1">
    <location>
        <position position="608"/>
    </location>
</feature>
<feature type="modified residue" description="N6-acetyllysine" evidence="1">
    <location>
        <position position="638"/>
    </location>
</feature>
<feature type="modified residue" description="N6-acetyllysine" evidence="7">
    <location>
        <position position="735"/>
    </location>
</feature>
<feature type="modified residue" description="Phosphoserine" evidence="6">
    <location>
        <position position="774"/>
    </location>
</feature>
<feature type="modified residue" description="Phosphoserine" evidence="6">
    <location>
        <position position="776"/>
    </location>
</feature>
<reference key="1">
    <citation type="journal article" date="2003" name="DNA Res.">
        <title>Prediction of the coding sequences of mouse homologues of KIAA gene: III. The complete nucleotide sequences of 500 mouse KIAA-homologous cDNAs identified by screening of terminal sequences of cDNA clones randomly sampled from size-fractionated libraries.</title>
        <authorList>
            <person name="Okazaki N."/>
            <person name="Kikuno R."/>
            <person name="Ohara R."/>
            <person name="Inamoto S."/>
            <person name="Koseki H."/>
            <person name="Hiraoka S."/>
            <person name="Saga Y."/>
            <person name="Nagase T."/>
            <person name="Ohara O."/>
            <person name="Koga H."/>
        </authorList>
    </citation>
    <scope>NUCLEOTIDE SEQUENCE [LARGE SCALE MRNA]</scope>
</reference>
<reference key="2">
    <citation type="journal article" date="2004" name="Genome Res.">
        <title>The status, quality, and expansion of the NIH full-length cDNA project: the Mammalian Gene Collection (MGC).</title>
        <authorList>
            <consortium name="The MGC Project Team"/>
        </authorList>
    </citation>
    <scope>NUCLEOTIDE SEQUENCE [LARGE SCALE MRNA]</scope>
</reference>
<reference key="3">
    <citation type="journal article" date="2003" name="Mol. Cell. Biol.">
        <title>Identification of Jade1, a gene encoding a PHD zinc finger protein, in a gene trap mutagenesis screen for genes involved in anteroposterior axis development.</title>
        <authorList>
            <person name="Tzouanacou E."/>
            <person name="Tweedie S."/>
            <person name="Wilson V."/>
        </authorList>
    </citation>
    <scope>IDENTIFICATION</scope>
    <source>
        <strain>C57BL/6J</strain>
    </source>
</reference>
<reference key="4">
    <citation type="journal article" date="2010" name="Cell">
        <title>A tissue-specific atlas of mouse protein phosphorylation and expression.</title>
        <authorList>
            <person name="Huttlin E.L."/>
            <person name="Jedrychowski M.P."/>
            <person name="Elias J.E."/>
            <person name="Goswami T."/>
            <person name="Rad R."/>
            <person name="Beausoleil S.A."/>
            <person name="Villen J."/>
            <person name="Haas W."/>
            <person name="Sowa M.E."/>
            <person name="Gygi S.P."/>
        </authorList>
    </citation>
    <scope>PHOSPHORYLATION [LARGE SCALE ANALYSIS] AT SER-578; SER-774 AND SER-776</scope>
    <scope>IDENTIFICATION BY MASS SPECTROMETRY [LARGE SCALE ANALYSIS]</scope>
    <source>
        <tissue>Kidney</tissue>
        <tissue>Lung</tissue>
        <tissue>Spleen</tissue>
        <tissue>Testis</tissue>
    </source>
</reference>
<reference key="5">
    <citation type="journal article" date="2013" name="Mol. Cell">
        <title>SIRT5-mediated lysine desuccinylation impacts diverse metabolic pathways.</title>
        <authorList>
            <person name="Park J."/>
            <person name="Chen Y."/>
            <person name="Tishkoff D.X."/>
            <person name="Peng C."/>
            <person name="Tan M."/>
            <person name="Dai L."/>
            <person name="Xie Z."/>
            <person name="Zhang Y."/>
            <person name="Zwaans B.M."/>
            <person name="Skinner M.E."/>
            <person name="Lombard D.B."/>
            <person name="Zhao Y."/>
        </authorList>
    </citation>
    <scope>ACETYLATION [LARGE SCALE ANALYSIS] AT LYS-32; LYS-35; LYS-601 AND LYS-735</scope>
    <scope>IDENTIFICATION BY MASS SPECTROMETRY [LARGE SCALE ANALYSIS]</scope>
    <source>
        <tissue>Embryonic fibroblast</tissue>
    </source>
</reference>
<dbReference type="EMBL" id="AK129091">
    <property type="protein sequence ID" value="BAC97901.1"/>
    <property type="status" value="ALT_FRAME"/>
    <property type="molecule type" value="mRNA"/>
</dbReference>
<dbReference type="EMBL" id="BC130270">
    <property type="protein sequence ID" value="AAI30271.1"/>
    <property type="molecule type" value="mRNA"/>
</dbReference>
<dbReference type="EMBL" id="BN000286">
    <property type="protein sequence ID" value="CAE30499.1"/>
    <property type="molecule type" value="mRNA"/>
</dbReference>
<dbReference type="CCDS" id="CCDS30042.2"/>
<dbReference type="RefSeq" id="NP_001393170.1">
    <property type="nucleotide sequence ID" value="NM_001406241.1"/>
</dbReference>
<dbReference type="RefSeq" id="NP_955021.3">
    <property type="nucleotide sequence ID" value="NM_199317.3"/>
</dbReference>
<dbReference type="SMR" id="Q6IE82"/>
<dbReference type="BioGRID" id="238277">
    <property type="interactions" value="2"/>
</dbReference>
<dbReference type="ComplexPortal" id="CPX-796">
    <property type="entry name" value="HBO1-4.3 histone acetyltransferase complex"/>
</dbReference>
<dbReference type="ComplexPortal" id="CPX-799">
    <property type="entry name" value="HBO1-5.3 histone acetyltransferase complex"/>
</dbReference>
<dbReference type="FunCoup" id="Q6IE82">
    <property type="interactions" value="963"/>
</dbReference>
<dbReference type="IntAct" id="Q6IE82">
    <property type="interactions" value="1"/>
</dbReference>
<dbReference type="MINT" id="Q6IE82"/>
<dbReference type="STRING" id="10090.ENSMUSP00000111042"/>
<dbReference type="GlyGen" id="Q6IE82">
    <property type="glycosylation" value="1 site"/>
</dbReference>
<dbReference type="iPTMnet" id="Q6IE82"/>
<dbReference type="PhosphoSitePlus" id="Q6IE82"/>
<dbReference type="PaxDb" id="10090-ENSMUSP00000111042"/>
<dbReference type="PeptideAtlas" id="Q6IE82"/>
<dbReference type="ProteomicsDB" id="269112"/>
<dbReference type="Pumba" id="Q6IE82"/>
<dbReference type="Antibodypedia" id="416">
    <property type="antibodies" value="108 antibodies from 20 providers"/>
</dbReference>
<dbReference type="DNASU" id="382207"/>
<dbReference type="Ensembl" id="ENSMUST00000043693.7">
    <property type="protein sequence ID" value="ENSMUSP00000048529.7"/>
    <property type="gene ID" value="ENSMUSG00000037315.16"/>
</dbReference>
<dbReference type="Ensembl" id="ENSMUST00000115384.9">
    <property type="protein sequence ID" value="ENSMUSP00000111042.6"/>
    <property type="gene ID" value="ENSMUSG00000037315.16"/>
</dbReference>
<dbReference type="GeneID" id="382207"/>
<dbReference type="KEGG" id="mmu:382207"/>
<dbReference type="UCSC" id="uc009ssz.2">
    <property type="organism name" value="mouse"/>
</dbReference>
<dbReference type="AGR" id="MGI:2148019"/>
<dbReference type="CTD" id="9767"/>
<dbReference type="MGI" id="MGI:2148019">
    <property type="gene designation" value="Jade3"/>
</dbReference>
<dbReference type="VEuPathDB" id="HostDB:ENSMUSG00000037315"/>
<dbReference type="eggNOG" id="KOG0954">
    <property type="taxonomic scope" value="Eukaryota"/>
</dbReference>
<dbReference type="GeneTree" id="ENSGT00940000158722"/>
<dbReference type="HOGENOM" id="CLU_016215_1_0_1"/>
<dbReference type="InParanoid" id="Q6IE82"/>
<dbReference type="OMA" id="MFCDQES"/>
<dbReference type="OrthoDB" id="20839at2759"/>
<dbReference type="PhylomeDB" id="Q6IE82"/>
<dbReference type="Reactome" id="R-MMU-3214847">
    <property type="pathway name" value="HATs acetylate histones"/>
</dbReference>
<dbReference type="BioGRID-ORCS" id="382207">
    <property type="hits" value="3 hits in 83 CRISPR screens"/>
</dbReference>
<dbReference type="PRO" id="PR:Q6IE82"/>
<dbReference type="Proteomes" id="UP000000589">
    <property type="component" value="Chromosome X"/>
</dbReference>
<dbReference type="RNAct" id="Q6IE82">
    <property type="molecule type" value="protein"/>
</dbReference>
<dbReference type="Bgee" id="ENSMUSG00000037315">
    <property type="expression patterns" value="Expressed in placenta labyrinth and 197 other cell types or tissues"/>
</dbReference>
<dbReference type="ExpressionAtlas" id="Q6IE82">
    <property type="expression patterns" value="baseline and differential"/>
</dbReference>
<dbReference type="GO" id="GO:0000123">
    <property type="term" value="C:histone acetyltransferase complex"/>
    <property type="evidence" value="ECO:0000266"/>
    <property type="project" value="ComplexPortal"/>
</dbReference>
<dbReference type="GO" id="GO:0005654">
    <property type="term" value="C:nucleoplasm"/>
    <property type="evidence" value="ECO:0000266"/>
    <property type="project" value="ComplexPortal"/>
</dbReference>
<dbReference type="GO" id="GO:0008270">
    <property type="term" value="F:zinc ion binding"/>
    <property type="evidence" value="ECO:0007669"/>
    <property type="project" value="UniProtKB-KW"/>
</dbReference>
<dbReference type="GO" id="GO:0051726">
    <property type="term" value="P:regulation of cell cycle"/>
    <property type="evidence" value="ECO:0000266"/>
    <property type="project" value="ComplexPortal"/>
</dbReference>
<dbReference type="GO" id="GO:0001558">
    <property type="term" value="P:regulation of cell growth"/>
    <property type="evidence" value="ECO:0000250"/>
    <property type="project" value="ComplexPortal"/>
</dbReference>
<dbReference type="GO" id="GO:2000278">
    <property type="term" value="P:regulation of DNA biosynthetic process"/>
    <property type="evidence" value="ECO:0000266"/>
    <property type="project" value="ComplexPortal"/>
</dbReference>
<dbReference type="GO" id="GO:0006275">
    <property type="term" value="P:regulation of DNA replication"/>
    <property type="evidence" value="ECO:0000266"/>
    <property type="project" value="ComplexPortal"/>
</dbReference>
<dbReference type="GO" id="GO:0006355">
    <property type="term" value="P:regulation of DNA-templated transcription"/>
    <property type="evidence" value="ECO:0000250"/>
    <property type="project" value="ComplexPortal"/>
</dbReference>
<dbReference type="CDD" id="cd15681">
    <property type="entry name" value="PHD_JADE3"/>
    <property type="match status" value="1"/>
</dbReference>
<dbReference type="FunFam" id="3.30.40.10:FF:000004">
    <property type="entry name" value="Jade family PHD finger 2"/>
    <property type="match status" value="1"/>
</dbReference>
<dbReference type="FunFam" id="3.30.40.10:FF:000030">
    <property type="entry name" value="Protein Jade-1 isoform 1"/>
    <property type="match status" value="1"/>
</dbReference>
<dbReference type="Gene3D" id="3.30.40.10">
    <property type="entry name" value="Zinc/RING finger domain, C3HC4 (zinc finger)"/>
    <property type="match status" value="2"/>
</dbReference>
<dbReference type="InterPro" id="IPR019542">
    <property type="entry name" value="Enhancer_polycomb-like_N"/>
</dbReference>
<dbReference type="InterPro" id="IPR034732">
    <property type="entry name" value="EPHD"/>
</dbReference>
<dbReference type="InterPro" id="IPR050701">
    <property type="entry name" value="Histone_Mod_Regulator"/>
</dbReference>
<dbReference type="InterPro" id="IPR039550">
    <property type="entry name" value="JADE3_PHD"/>
</dbReference>
<dbReference type="InterPro" id="IPR019786">
    <property type="entry name" value="Zinc_finger_PHD-type_CS"/>
</dbReference>
<dbReference type="InterPro" id="IPR011011">
    <property type="entry name" value="Znf_FYVE_PHD"/>
</dbReference>
<dbReference type="InterPro" id="IPR001965">
    <property type="entry name" value="Znf_PHD"/>
</dbReference>
<dbReference type="InterPro" id="IPR019787">
    <property type="entry name" value="Znf_PHD-finger"/>
</dbReference>
<dbReference type="InterPro" id="IPR013083">
    <property type="entry name" value="Znf_RING/FYVE/PHD"/>
</dbReference>
<dbReference type="PANTHER" id="PTHR13793">
    <property type="entry name" value="PHD FINGER PROTEINS"/>
    <property type="match status" value="1"/>
</dbReference>
<dbReference type="PANTHER" id="PTHR13793:SF27">
    <property type="entry name" value="PROTEIN JADE-3"/>
    <property type="match status" value="1"/>
</dbReference>
<dbReference type="Pfam" id="PF10513">
    <property type="entry name" value="EPL1"/>
    <property type="match status" value="1"/>
</dbReference>
<dbReference type="Pfam" id="PF13831">
    <property type="entry name" value="PHD_2"/>
    <property type="match status" value="1"/>
</dbReference>
<dbReference type="Pfam" id="PF13832">
    <property type="entry name" value="zf-HC5HC2H_2"/>
    <property type="match status" value="1"/>
</dbReference>
<dbReference type="SMART" id="SM00249">
    <property type="entry name" value="PHD"/>
    <property type="match status" value="2"/>
</dbReference>
<dbReference type="SUPFAM" id="SSF57903">
    <property type="entry name" value="FYVE/PHD zinc finger"/>
    <property type="match status" value="1"/>
</dbReference>
<dbReference type="PROSITE" id="PS51805">
    <property type="entry name" value="EPHD"/>
    <property type="match status" value="1"/>
</dbReference>
<dbReference type="PROSITE" id="PS01359">
    <property type="entry name" value="ZF_PHD_1"/>
    <property type="match status" value="1"/>
</dbReference>
<dbReference type="PROSITE" id="PS50016">
    <property type="entry name" value="ZF_PHD_2"/>
    <property type="match status" value="1"/>
</dbReference>
<evidence type="ECO:0000250" key="1">
    <source>
        <dbReference type="UniProtKB" id="Q92613"/>
    </source>
</evidence>
<evidence type="ECO:0000255" key="2">
    <source>
        <dbReference type="PROSITE-ProRule" id="PRU00146"/>
    </source>
</evidence>
<evidence type="ECO:0000255" key="3">
    <source>
        <dbReference type="PROSITE-ProRule" id="PRU01146"/>
    </source>
</evidence>
<evidence type="ECO:0000256" key="4">
    <source>
        <dbReference type="SAM" id="MobiDB-lite"/>
    </source>
</evidence>
<evidence type="ECO:0000305" key="5"/>
<evidence type="ECO:0007744" key="6">
    <source>
    </source>
</evidence>
<evidence type="ECO:0007744" key="7">
    <source>
    </source>
</evidence>
<accession>Q6IE82</accession>
<accession>A1L3T5</accession>
<accession>Q6ZQG2</accession>
<sequence>MKRHRPVSSSESSDECPSTSFTSSSMYRKKSKNPKEQKKSAEVFRKDLISAMKIPDSHHVNPDSYYLFTDTWKEEWEKGVQVPANPDSVPTPSLRIISEKVKEMLFVRPRKYIRCSSPESAEPGYINTLEQAASTCRYDLDDMDIFWLQELNEDLGEMGYGPIDETLMEKTIEVLERHCHENMNHAIETVEGLGIEYDEDVICDVCRSPDSEEGNDMVFCDKCNVCVHQACYGILKIPEGSWLCRSCVLGIYPQCVLCPKKGGAMKTTRTGTKWAHVSCALWIPEVSIACPERMEPVTKISHIPPSRWALVCNLCKLKTGACIQCSVKSCITAFHVTCAFEHGLEMKTILDEGDEVKFKSFCLKHSQNKPKLGDAEYHHHRVAEQSQAKSEKTSLRAQKLRELEEEFYTLVQVEDVAKEMELSAFTVDFIYNYWKLKRKSNFNKPLIPPKEEEENGLVQPKEESIHTRMRMFMHLRQDLERVRNLCYMISRREKLKLSHTKVQEQIFGLQVQLINEEITEGLSLTNALENSLFYPPPRITLKLKMPKSTSEDCKDSSTETEHQLSSPGSSSPGHSKRSPQMPEEPLDMNVKIYPRYPLESKSNCLQTSRSHSRCETKSSSPTPRAPSAEFYHGQSLGKPLALQAALHGQVSIGNGKNQPNSRVSSSNGLEGNWSGNITQKVNSSEVCYDQESMLSSHLPSPGNIRKSSMEHFSRSFKEATNTWVKPTEDLQYCVKPTKNVSSKEQLWGRQLLRRPTGRASYQETDGYCPDLEPSDSEAEGEGSKETPRVKRESSDRENPSHDSARECHGKTKTHPHSHSSMQR</sequence>
<gene>
    <name type="primary">Jade3</name>
    <name type="synonym">Kiaa0215</name>
    <name type="synonym">Phf16</name>
</gene>
<keyword id="KW-0007">Acetylation</keyword>
<keyword id="KW-0479">Metal-binding</keyword>
<keyword id="KW-0597">Phosphoprotein</keyword>
<keyword id="KW-1185">Reference proteome</keyword>
<keyword id="KW-0677">Repeat</keyword>
<keyword id="KW-0862">Zinc</keyword>
<keyword id="KW-0863">Zinc-finger</keyword>
<organism>
    <name type="scientific">Mus musculus</name>
    <name type="common">Mouse</name>
    <dbReference type="NCBI Taxonomy" id="10090"/>
    <lineage>
        <taxon>Eukaryota</taxon>
        <taxon>Metazoa</taxon>
        <taxon>Chordata</taxon>
        <taxon>Craniata</taxon>
        <taxon>Vertebrata</taxon>
        <taxon>Euteleostomi</taxon>
        <taxon>Mammalia</taxon>
        <taxon>Eutheria</taxon>
        <taxon>Euarchontoglires</taxon>
        <taxon>Glires</taxon>
        <taxon>Rodentia</taxon>
        <taxon>Myomorpha</taxon>
        <taxon>Muroidea</taxon>
        <taxon>Muridae</taxon>
        <taxon>Murinae</taxon>
        <taxon>Mus</taxon>
        <taxon>Mus</taxon>
    </lineage>
</organism>